<protein>
    <recommendedName>
        <fullName>Uncharacterized protein L581</fullName>
    </recommendedName>
</protein>
<proteinExistence type="predicted"/>
<keyword id="KW-1185">Reference proteome</keyword>
<organism>
    <name type="scientific">Acanthamoeba polyphaga mimivirus</name>
    <name type="common">APMV</name>
    <dbReference type="NCBI Taxonomy" id="212035"/>
    <lineage>
        <taxon>Viruses</taxon>
        <taxon>Varidnaviria</taxon>
        <taxon>Bamfordvirae</taxon>
        <taxon>Nucleocytoviricota</taxon>
        <taxon>Megaviricetes</taxon>
        <taxon>Imitervirales</taxon>
        <taxon>Mimiviridae</taxon>
        <taxon>Megamimivirinae</taxon>
        <taxon>Mimivirus</taxon>
        <taxon>Mimivirus bradfordmassiliense</taxon>
    </lineage>
</organism>
<organismHost>
    <name type="scientific">Acanthamoeba polyphaga</name>
    <name type="common">Amoeba</name>
    <dbReference type="NCBI Taxonomy" id="5757"/>
</organismHost>
<sequence length="742" mass="86627">MMLLKRSNDNIVLSPIMNRQNRQNNRQNSTKKKPFIPNNQDRFRSKHRDSSRMDPVDNKTLISFTSGKPNQEKSFSHDTGTNKYSSSKLSETFTQTKPNNTDKFRSKYSKQRYSENHKILETISRSHSTILNVDIKDNVELLNQLLSFNKESNQQIPNNPSVPKRVYFVLDKSSNQTDKNMARITDDNKSNGLSIENNSDFVNMILPYVSGAIKNIRVKPWFCSMIIINNFHMENKYFVMILKLWTCYYNIWKKNKKIPEPPKLVTITNHYDDTISNLLPSNTSSFTLDKNSCYTTVVYDNESENLSIGSKARYQRAANIAKHYSDLYRDKSYNGTYVIFVPSKKEYLIVKKHLESIITDKSQLKRIVVTTKFPTEYGISVVIDTMTHYYSDFNMDQESSQTLGWISDNTSKLRRNVINKYSGGIYVVMQSEINYKTFCTKSMTNNFSIYDIVKLIRHNIDPEIIMDDIMDQIRLDSVLIFLKKLGIINANNQLTVMGRFCLEFPLDLRKSAMIYHLYNNGTPNLMLYILVLSVIDNYGSGIYVWPKKEDNEDLIEYTMRIDDIMLELEDKFAGYSDVDTLFNIWTTIAKYGNPLNVNYVRKFCDDNRLNFSKMRNAINLTKDCLDVFSENSFNVNLNLTNFDQPYGKTFYKILEITHFDSKIVVSYDYFKHKTIAYHNDKECCIDNRAIHKIDLGNNPEKTYYALSHNRYTTFTEDDIDIINVLHALPDSDHETQQDFFPD</sequence>
<reference key="1">
    <citation type="journal article" date="2004" name="Science">
        <title>The 1.2-megabase genome sequence of Mimivirus.</title>
        <authorList>
            <person name="Raoult D."/>
            <person name="Audic S."/>
            <person name="Robert C."/>
            <person name="Abergel C."/>
            <person name="Renesto P."/>
            <person name="Ogata H."/>
            <person name="La Scola B."/>
            <person name="Susan M."/>
            <person name="Claverie J.-M."/>
        </authorList>
    </citation>
    <scope>NUCLEOTIDE SEQUENCE [LARGE SCALE GENOMIC DNA]</scope>
    <source>
        <strain>Rowbotham-Bradford</strain>
    </source>
</reference>
<dbReference type="EMBL" id="AY653733">
    <property type="protein sequence ID" value="AAV50844.1"/>
    <property type="molecule type" value="Genomic_DNA"/>
</dbReference>
<dbReference type="SMR" id="Q5UR55"/>
<dbReference type="KEGG" id="vg:9925217"/>
<dbReference type="OrthoDB" id="14159at10239"/>
<dbReference type="Proteomes" id="UP000001134">
    <property type="component" value="Genome"/>
</dbReference>
<evidence type="ECO:0000256" key="1">
    <source>
        <dbReference type="SAM" id="MobiDB-lite"/>
    </source>
</evidence>
<gene>
    <name type="ordered locus">MIMI_L581</name>
</gene>
<feature type="chain" id="PRO_0000253283" description="Uncharacterized protein L581">
    <location>
        <begin position="1"/>
        <end position="742"/>
    </location>
</feature>
<feature type="region of interest" description="Disordered" evidence="1">
    <location>
        <begin position="1"/>
        <end position="102"/>
    </location>
</feature>
<feature type="compositionally biased region" description="Low complexity" evidence="1">
    <location>
        <begin position="18"/>
        <end position="28"/>
    </location>
</feature>
<feature type="compositionally biased region" description="Basic and acidic residues" evidence="1">
    <location>
        <begin position="48"/>
        <end position="57"/>
    </location>
</feature>
<feature type="compositionally biased region" description="Polar residues" evidence="1">
    <location>
        <begin position="60"/>
        <end position="69"/>
    </location>
</feature>
<feature type="compositionally biased region" description="Polar residues" evidence="1">
    <location>
        <begin position="77"/>
        <end position="99"/>
    </location>
</feature>
<accession>Q5UR55</accession>
<name>YL581_MIMIV</name>